<evidence type="ECO:0000250" key="1"/>
<evidence type="ECO:0000255" key="2"/>
<evidence type="ECO:0000256" key="3">
    <source>
        <dbReference type="SAM" id="MobiDB-lite"/>
    </source>
</evidence>
<evidence type="ECO:0000269" key="4">
    <source>
    </source>
</evidence>
<evidence type="ECO:0000269" key="5">
    <source>
    </source>
</evidence>
<evidence type="ECO:0000269" key="6">
    <source>
    </source>
</evidence>
<evidence type="ECO:0000305" key="7"/>
<organism>
    <name type="scientific">Saccharomyces cerevisiae (strain ATCC 204508 / S288c)</name>
    <name type="common">Baker's yeast</name>
    <dbReference type="NCBI Taxonomy" id="559292"/>
    <lineage>
        <taxon>Eukaryota</taxon>
        <taxon>Fungi</taxon>
        <taxon>Dikarya</taxon>
        <taxon>Ascomycota</taxon>
        <taxon>Saccharomycotina</taxon>
        <taxon>Saccharomycetes</taxon>
        <taxon>Saccharomycetales</taxon>
        <taxon>Saccharomycetaceae</taxon>
        <taxon>Saccharomyces</taxon>
    </lineage>
</organism>
<gene>
    <name type="primary">TIR1</name>
    <name type="synonym">SRP1</name>
    <name type="ordered locus">YER011W</name>
</gene>
<reference key="1">
    <citation type="journal article" date="1988" name="J. Mol. Biol.">
        <title>Yeast gene SRP1 (serine-rich protein). Intragenic repeat structure and identification of a family of SRP1-related DNA sequences.</title>
        <authorList>
            <person name="Marguet D."/>
            <person name="Guo X.J."/>
            <person name="Lauquin G.J.-M."/>
        </authorList>
    </citation>
    <scope>NUCLEOTIDE SEQUENCE [GENOMIC DNA]</scope>
</reference>
<reference key="2">
    <citation type="journal article" date="1997" name="Nature">
        <title>The nucleotide sequence of Saccharomyces cerevisiae chromosome V.</title>
        <authorList>
            <person name="Dietrich F.S."/>
            <person name="Mulligan J.T."/>
            <person name="Hennessy K.M."/>
            <person name="Yelton M.A."/>
            <person name="Allen E."/>
            <person name="Araujo R."/>
            <person name="Aviles E."/>
            <person name="Berno A."/>
            <person name="Brennan T."/>
            <person name="Carpenter J."/>
            <person name="Chen E."/>
            <person name="Cherry J.M."/>
            <person name="Chung E."/>
            <person name="Duncan M."/>
            <person name="Guzman E."/>
            <person name="Hartzell G."/>
            <person name="Hunicke-Smith S."/>
            <person name="Hyman R.W."/>
            <person name="Kayser A."/>
            <person name="Komp C."/>
            <person name="Lashkari D."/>
            <person name="Lew H."/>
            <person name="Lin D."/>
            <person name="Mosedale D."/>
            <person name="Nakahara K."/>
            <person name="Namath A."/>
            <person name="Norgren R."/>
            <person name="Oefner P."/>
            <person name="Oh C."/>
            <person name="Petel F.X."/>
            <person name="Roberts D."/>
            <person name="Sehl P."/>
            <person name="Schramm S."/>
            <person name="Shogren T."/>
            <person name="Smith V."/>
            <person name="Taylor P."/>
            <person name="Wei Y."/>
            <person name="Botstein D."/>
            <person name="Davis R.W."/>
        </authorList>
    </citation>
    <scope>NUCLEOTIDE SEQUENCE [LARGE SCALE GENOMIC DNA]</scope>
    <source>
        <strain>ATCC 204508 / S288c</strain>
    </source>
</reference>
<reference key="3">
    <citation type="journal article" date="2014" name="G3 (Bethesda)">
        <title>The reference genome sequence of Saccharomyces cerevisiae: Then and now.</title>
        <authorList>
            <person name="Engel S.R."/>
            <person name="Dietrich F.S."/>
            <person name="Fisk D.G."/>
            <person name="Binkley G."/>
            <person name="Balakrishnan R."/>
            <person name="Costanzo M.C."/>
            <person name="Dwight S.S."/>
            <person name="Hitz B.C."/>
            <person name="Karra K."/>
            <person name="Nash R.S."/>
            <person name="Weng S."/>
            <person name="Wong E.D."/>
            <person name="Lloyd P."/>
            <person name="Skrzypek M.S."/>
            <person name="Miyasato S.R."/>
            <person name="Simison M."/>
            <person name="Cherry J.M."/>
        </authorList>
    </citation>
    <scope>GENOME REANNOTATION</scope>
    <source>
        <strain>ATCC 204508 / S288c</strain>
    </source>
</reference>
<reference key="4">
    <citation type="unpublished observations" date="1993-10">
        <authorList>
            <person name="Bairoch A."/>
        </authorList>
    </citation>
    <scope>PRESENCE OF A PIR1/2/3 REPEAT</scope>
</reference>
<reference key="5">
    <citation type="journal article" date="1995" name="Mol. Microbiol.">
        <title>Cold-shock induction of a family of TIP1-related proteins associated with the membrane in Saccharomyces cerevisiae.</title>
        <authorList>
            <person name="Kowalski L.R.Z."/>
            <person name="Kondo K."/>
            <person name="Inouye M."/>
        </authorList>
    </citation>
    <scope>INDUCTION</scope>
    <scope>SUBCELLULAR LOCATION</scope>
</reference>
<reference key="6">
    <citation type="journal article" date="2001" name="J. Bacteriol.">
        <title>Reciprocal regulation of anaerobic and aerobic cell wall mannoprotein gene expression in Saccharomyces cerevisiae.</title>
        <authorList>
            <person name="Abramova N.E."/>
            <person name="Sertil O."/>
            <person name="Mehta S."/>
            <person name="Lowry C.V."/>
        </authorList>
    </citation>
    <scope>FUNCTION</scope>
    <scope>INDUCTION</scope>
</reference>
<reference key="7">
    <citation type="journal article" date="2003" name="Nature">
        <title>Global analysis of protein expression in yeast.</title>
        <authorList>
            <person name="Ghaemmaghami S."/>
            <person name="Huh W.-K."/>
            <person name="Bower K."/>
            <person name="Howson R.W."/>
            <person name="Belle A."/>
            <person name="Dephoure N."/>
            <person name="O'Shea E.K."/>
            <person name="Weissman J.S."/>
        </authorList>
    </citation>
    <scope>LEVEL OF PROTEIN EXPRESSION [LARGE SCALE ANALYSIS]</scope>
</reference>
<reference key="8">
    <citation type="journal article" date="2005" name="J. Biol. Chem.">
        <title>Comprehensive proteomic analysis of Saccharomyces cerevisiae cell walls: identification of proteins covalently attached via glycosylphosphatidylinositol remnants or mild alkali-sensitive linkages.</title>
        <authorList>
            <person name="Yin Q.Y."/>
            <person name="de Groot P.W.J."/>
            <person name="Dekker H.L."/>
            <person name="de Jong L."/>
            <person name="Klis F.M."/>
            <person name="de Koster C.G."/>
        </authorList>
    </citation>
    <scope>SUBCELLULAR LOCATION</scope>
    <scope>IDENTIFICATION BY MASS SPECTROMETRY</scope>
    <scope>GPI-ANCHOR</scope>
</reference>
<reference key="9">
    <citation type="journal article" date="2005" name="Nat. Genet.">
        <title>Intragenic tandem repeats generate functional variability.</title>
        <authorList>
            <person name="Verstrepen K.J."/>
            <person name="Jansen A."/>
            <person name="Lewitter F."/>
            <person name="Fink G.R."/>
        </authorList>
    </citation>
    <scope>REPEATS</scope>
</reference>
<feature type="signal peptide" evidence="2">
    <location>
        <begin position="1"/>
        <end position="18"/>
    </location>
</feature>
<feature type="chain" id="PRO_0000033233" description="Cold shock-induced protein TIR1">
    <location>
        <begin position="19"/>
        <end position="233"/>
    </location>
</feature>
<feature type="propeptide" id="PRO_0000033234" description="Removed in mature form" evidence="2">
    <location>
        <begin position="234"/>
        <end position="254"/>
    </location>
</feature>
<feature type="repeat" description="1-1">
    <location>
        <begin position="114"/>
        <end position="119"/>
    </location>
</feature>
<feature type="repeat" description="1-2">
    <location>
        <begin position="120"/>
        <end position="125"/>
    </location>
</feature>
<feature type="repeat" description="1-3">
    <location>
        <begin position="126"/>
        <end position="131"/>
    </location>
</feature>
<feature type="repeat" description="1-4">
    <location>
        <begin position="132"/>
        <end position="137"/>
    </location>
</feature>
<feature type="repeat" description="1-5">
    <location>
        <begin position="138"/>
        <end position="143"/>
    </location>
</feature>
<feature type="repeat" description="2-1">
    <location>
        <begin position="144"/>
        <end position="155"/>
    </location>
</feature>
<feature type="repeat" description="2-2">
    <location>
        <begin position="156"/>
        <end position="167"/>
    </location>
</feature>
<feature type="repeat" description="2-3">
    <location>
        <begin position="168"/>
        <end position="179"/>
    </location>
</feature>
<feature type="repeat" description="2-4">
    <location>
        <begin position="180"/>
        <end position="191"/>
    </location>
</feature>
<feature type="repeat" description="2-5">
    <location>
        <begin position="192"/>
        <end position="203"/>
    </location>
</feature>
<feature type="repeat" description="PIR1/2/3">
    <location>
        <begin position="210"/>
        <end position="224"/>
    </location>
</feature>
<feature type="region of interest" description="Disordered" evidence="3">
    <location>
        <begin position="110"/>
        <end position="213"/>
    </location>
</feature>
<feature type="region of interest" description="5 X 6 AA approximate tandem repeats, Ala/Ser-rich">
    <location>
        <begin position="114"/>
        <end position="143"/>
    </location>
</feature>
<feature type="region of interest" description="5 X 12 AA approximate tandem repeats, Ala/Ser-rich">
    <location>
        <begin position="144"/>
        <end position="203"/>
    </location>
</feature>
<feature type="compositionally biased region" description="Low complexity" evidence="3">
    <location>
        <begin position="113"/>
        <end position="197"/>
    </location>
</feature>
<feature type="compositionally biased region" description="Polar residues" evidence="3">
    <location>
        <begin position="201"/>
        <end position="213"/>
    </location>
</feature>
<feature type="site" description="Covalent attachment to cell wall glycan" evidence="1">
    <location>
        <position position="220"/>
    </location>
</feature>
<feature type="lipid moiety-binding region" description="GPI-anchor amidated asparagine" evidence="2">
    <location>
        <position position="233"/>
    </location>
</feature>
<comment type="function">
    <text evidence="4">Component of the cell wall. Required for anaerobic growth.</text>
</comment>
<comment type="subcellular location">
    <subcellularLocation>
        <location>Secreted</location>
        <location>Cell wall</location>
    </subcellularLocation>
    <subcellularLocation>
        <location>Membrane</location>
        <topology>Lipid-anchor</topology>
        <topology>GPI-anchor</topology>
    </subcellularLocation>
    <text>Covalently-linked GPI-modified cell wall protein (GPI-CWP).</text>
</comment>
<comment type="induction">
    <text evidence="4 6">Induced during anaerobic growth and by cold shock and glucose.</text>
</comment>
<comment type="domain">
    <text>The number of the intragenic tandem repeats varies between different S.cerevisiae strains.</text>
</comment>
<comment type="PTM">
    <text evidence="7">O-glycosylated.</text>
</comment>
<comment type="PTM">
    <text>The GPI-anchor is attached to the protein in the endoplasmic reticulum and serves to target the protein to the cell surface. There, the glucosamine-inositol phospholipid moiety is cleaved off and the GPI-modified mannoprotein is covalently attached via its lipidless GPI glycan remnant to the 1,6-beta-glucan of the outer cell wall layer.</text>
</comment>
<comment type="PTM">
    <text evidence="1">Covalently linked to beta-1,3-glucan of the inner cell wall layer via an alkali-sensitive ester linkage between the gamma-carboxyl group of glutamic acids, arising from a specific glutamine within the PIR1/2/3 repeat, and hydroxyl groups of glucoses of beta-1,3-glucan chains.</text>
</comment>
<comment type="miscellaneous">
    <text evidence="5">Present with 623 molecules/cell in log phase SD medium.</text>
</comment>
<comment type="similarity">
    <text evidence="7">Belongs to the SRP1/TIP1 family.</text>
</comment>
<name>TIR1_YEAST</name>
<proteinExistence type="evidence at protein level"/>
<sequence length="254" mass="24906">MAYTKIALFAAIAALASAQTQDQINELNVILNDVKSHLQEYISLASDSSSGFSLSSMPAGVLDIGMALASATDDSYTTLYSEVDFAGVSKMLTMVPWYSSRLEPALKSLNGDASSSAAPSSSAAPTSSAAPSSSAAPTSSAASSSSEAKSSSAAPSSSEAKSSSAAPSSSEAKSSSAAPSSSEAKSSSAAPSSTEAKITSAAPSSTGAKTSAISQITDGQIQATKAVSEQTENGAAKAFVGMGAGVVAAAAMLL</sequence>
<dbReference type="EMBL" id="X12775">
    <property type="protein sequence ID" value="CAA31262.1"/>
    <property type="molecule type" value="Genomic_DNA"/>
</dbReference>
<dbReference type="EMBL" id="U18778">
    <property type="protein sequence ID" value="AAB64544.1"/>
    <property type="molecule type" value="Genomic_DNA"/>
</dbReference>
<dbReference type="EMBL" id="BK006939">
    <property type="protein sequence ID" value="DAA07662.1"/>
    <property type="molecule type" value="Genomic_DNA"/>
</dbReference>
<dbReference type="PIR" id="S05803">
    <property type="entry name" value="PJBYS"/>
</dbReference>
<dbReference type="RefSeq" id="NP_010927.1">
    <property type="nucleotide sequence ID" value="NM_001178902.1"/>
</dbReference>
<dbReference type="BioGRID" id="36742">
    <property type="interactions" value="27"/>
</dbReference>
<dbReference type="DIP" id="DIP-2390N"/>
<dbReference type="FunCoup" id="P10863">
    <property type="interactions" value="100"/>
</dbReference>
<dbReference type="IntAct" id="P10863">
    <property type="interactions" value="3"/>
</dbReference>
<dbReference type="MINT" id="P10863"/>
<dbReference type="STRING" id="4932.YER011W"/>
<dbReference type="PaxDb" id="4932-YER011W"/>
<dbReference type="PeptideAtlas" id="P10863"/>
<dbReference type="EnsemblFungi" id="YER011W_mRNA">
    <property type="protein sequence ID" value="YER011W"/>
    <property type="gene ID" value="YER011W"/>
</dbReference>
<dbReference type="GeneID" id="856729"/>
<dbReference type="KEGG" id="sce:YER011W"/>
<dbReference type="AGR" id="SGD:S000000813"/>
<dbReference type="SGD" id="S000000813">
    <property type="gene designation" value="TIR1"/>
</dbReference>
<dbReference type="VEuPathDB" id="FungiDB:YER011W"/>
<dbReference type="eggNOG" id="ENOG502RYU4">
    <property type="taxonomic scope" value="Eukaryota"/>
</dbReference>
<dbReference type="GeneTree" id="ENSGT00940000176541"/>
<dbReference type="HOGENOM" id="CLU_071083_0_0_1"/>
<dbReference type="InParanoid" id="P10863"/>
<dbReference type="OMA" id="MAYTKIA"/>
<dbReference type="OrthoDB" id="4069694at2759"/>
<dbReference type="BioCyc" id="YEAST:G3O-30198-MONOMER"/>
<dbReference type="BioGRID-ORCS" id="856729">
    <property type="hits" value="0 hits in 10 CRISPR screens"/>
</dbReference>
<dbReference type="PRO" id="PR:P10863"/>
<dbReference type="Proteomes" id="UP000002311">
    <property type="component" value="Chromosome V"/>
</dbReference>
<dbReference type="RNAct" id="P10863">
    <property type="molecule type" value="protein"/>
</dbReference>
<dbReference type="GO" id="GO:0071944">
    <property type="term" value="C:cell periphery"/>
    <property type="evidence" value="ECO:0007005"/>
    <property type="project" value="SGD"/>
</dbReference>
<dbReference type="GO" id="GO:0005576">
    <property type="term" value="C:extracellular region"/>
    <property type="evidence" value="ECO:0007669"/>
    <property type="project" value="UniProtKB-KW"/>
</dbReference>
<dbReference type="GO" id="GO:0009277">
    <property type="term" value="C:fungal-type cell wall"/>
    <property type="evidence" value="ECO:0000314"/>
    <property type="project" value="SGD"/>
</dbReference>
<dbReference type="GO" id="GO:0000324">
    <property type="term" value="C:fungal-type vacuole"/>
    <property type="evidence" value="ECO:0007005"/>
    <property type="project" value="SGD"/>
</dbReference>
<dbReference type="GO" id="GO:0098552">
    <property type="term" value="C:side of membrane"/>
    <property type="evidence" value="ECO:0007669"/>
    <property type="project" value="UniProtKB-KW"/>
</dbReference>
<dbReference type="GO" id="GO:0005199">
    <property type="term" value="F:structural constituent of cell wall"/>
    <property type="evidence" value="ECO:0000314"/>
    <property type="project" value="SGD"/>
</dbReference>
<dbReference type="GO" id="GO:0031505">
    <property type="term" value="P:fungal-type cell wall organization"/>
    <property type="evidence" value="ECO:0000314"/>
    <property type="project" value="SGD"/>
</dbReference>
<dbReference type="InterPro" id="IPR000992">
    <property type="entry name" value="SRP1_TIP1"/>
</dbReference>
<dbReference type="InterPro" id="IPR000420">
    <property type="entry name" value="Yeast_PIR_rpt"/>
</dbReference>
<dbReference type="InterPro" id="IPR050788">
    <property type="entry name" value="Yeast_SRP1/TIP1_CWP"/>
</dbReference>
<dbReference type="PANTHER" id="PTHR31002:SF34">
    <property type="entry name" value="CELL WALL PROTEIN CWP1-RELATED"/>
    <property type="match status" value="1"/>
</dbReference>
<dbReference type="PANTHER" id="PTHR31002">
    <property type="entry name" value="SERIPAUPERIN"/>
    <property type="match status" value="1"/>
</dbReference>
<dbReference type="Pfam" id="PF00399">
    <property type="entry name" value="PIR"/>
    <property type="match status" value="1"/>
</dbReference>
<dbReference type="Pfam" id="PF00660">
    <property type="entry name" value="SRP1_TIP1"/>
    <property type="match status" value="1"/>
</dbReference>
<dbReference type="PROSITE" id="PS00929">
    <property type="entry name" value="PIR_REPEAT_1"/>
    <property type="match status" value="1"/>
</dbReference>
<dbReference type="PROSITE" id="PS50256">
    <property type="entry name" value="PIR_REPEAT_2"/>
    <property type="match status" value="1"/>
</dbReference>
<dbReference type="PROSITE" id="PS00724">
    <property type="entry name" value="SRP1_TIP1"/>
    <property type="match status" value="1"/>
</dbReference>
<keyword id="KW-0134">Cell wall</keyword>
<keyword id="KW-0325">Glycoprotein</keyword>
<keyword id="KW-0336">GPI-anchor</keyword>
<keyword id="KW-0449">Lipoprotein</keyword>
<keyword id="KW-0472">Membrane</keyword>
<keyword id="KW-1185">Reference proteome</keyword>
<keyword id="KW-0677">Repeat</keyword>
<keyword id="KW-0964">Secreted</keyword>
<keyword id="KW-0732">Signal</keyword>
<keyword id="KW-0346">Stress response</keyword>
<protein>
    <recommendedName>
        <fullName>Cold shock-induced protein TIR1</fullName>
    </recommendedName>
    <alternativeName>
        <fullName>Serine-rich protein 1</fullName>
    </alternativeName>
    <alternativeName>
        <fullName>TIP1-related protein 1</fullName>
    </alternativeName>
</protein>
<accession>P10863</accession>
<accession>D3DLQ8</accession>